<keyword id="KW-0963">Cytoplasm</keyword>
<keyword id="KW-0217">Developmental protein</keyword>
<keyword id="KW-0479">Metal-binding</keyword>
<keyword id="KW-1185">Reference proteome</keyword>
<keyword id="KW-0804">Transcription</keyword>
<keyword id="KW-0805">Transcription regulation</keyword>
<keyword id="KW-0862">Zinc</keyword>
<keyword id="KW-0863">Zinc-finger</keyword>
<protein>
    <recommendedName>
        <fullName>Mini zinc finger protein 3</fullName>
        <shortName>AtMIF3</shortName>
    </recommendedName>
</protein>
<dbReference type="EMBL" id="DQ217608">
    <property type="protein sequence ID" value="ABB20816.1"/>
    <property type="molecule type" value="mRNA"/>
</dbReference>
<dbReference type="EMBL" id="AC011809">
    <property type="status" value="NOT_ANNOTATED_CDS"/>
    <property type="molecule type" value="Genomic_DNA"/>
</dbReference>
<dbReference type="EMBL" id="CP002684">
    <property type="protein sequence ID" value="AEE29768.1"/>
    <property type="molecule type" value="Genomic_DNA"/>
</dbReference>
<dbReference type="RefSeq" id="NP_001077560.1">
    <property type="nucleotide sequence ID" value="NM_001084091.2"/>
</dbReference>
<dbReference type="FunCoup" id="Q2Q493">
    <property type="interactions" value="3"/>
</dbReference>
<dbReference type="STRING" id="3702.Q2Q493"/>
<dbReference type="PaxDb" id="3702-AT1G18835.1"/>
<dbReference type="ProteomicsDB" id="238338"/>
<dbReference type="EnsemblPlants" id="AT1G18835.1">
    <property type="protein sequence ID" value="AT1G18835.1"/>
    <property type="gene ID" value="AT1G18835"/>
</dbReference>
<dbReference type="GeneID" id="5007704"/>
<dbReference type="Gramene" id="AT1G18835.1">
    <property type="protein sequence ID" value="AT1G18835.1"/>
    <property type="gene ID" value="AT1G18835"/>
</dbReference>
<dbReference type="KEGG" id="ath:AT1G18835"/>
<dbReference type="Araport" id="AT1G18835"/>
<dbReference type="TAIR" id="AT1G18835">
    <property type="gene designation" value="MIF3"/>
</dbReference>
<dbReference type="eggNOG" id="ENOG502S421">
    <property type="taxonomic scope" value="Eukaryota"/>
</dbReference>
<dbReference type="HOGENOM" id="CLU_123565_0_0_1"/>
<dbReference type="InParanoid" id="Q2Q493"/>
<dbReference type="OMA" id="NEVVCEY"/>
<dbReference type="OrthoDB" id="682018at2759"/>
<dbReference type="PhylomeDB" id="Q2Q493"/>
<dbReference type="PRO" id="PR:Q2Q493"/>
<dbReference type="Proteomes" id="UP000006548">
    <property type="component" value="Chromosome 1"/>
</dbReference>
<dbReference type="ExpressionAtlas" id="Q2Q493">
    <property type="expression patterns" value="baseline and differential"/>
</dbReference>
<dbReference type="GO" id="GO:0005737">
    <property type="term" value="C:cytoplasm"/>
    <property type="evidence" value="ECO:0000250"/>
    <property type="project" value="UniProtKB"/>
</dbReference>
<dbReference type="GO" id="GO:0005634">
    <property type="term" value="C:nucleus"/>
    <property type="evidence" value="ECO:0000250"/>
    <property type="project" value="UniProtKB"/>
</dbReference>
<dbReference type="GO" id="GO:0042803">
    <property type="term" value="F:protein homodimerization activity"/>
    <property type="evidence" value="ECO:0000250"/>
    <property type="project" value="UniProtKB"/>
</dbReference>
<dbReference type="GO" id="GO:0008270">
    <property type="term" value="F:zinc ion binding"/>
    <property type="evidence" value="ECO:0007669"/>
    <property type="project" value="UniProtKB-KW"/>
</dbReference>
<dbReference type="GO" id="GO:0048509">
    <property type="term" value="P:regulation of meristem development"/>
    <property type="evidence" value="ECO:0000315"/>
    <property type="project" value="TAIR"/>
</dbReference>
<dbReference type="InterPro" id="IPR006456">
    <property type="entry name" value="ZF_HD_homeobox_Cys/His_dimer"/>
</dbReference>
<dbReference type="NCBIfam" id="TIGR01566">
    <property type="entry name" value="ZF_HD_prot_N"/>
    <property type="match status" value="1"/>
</dbReference>
<dbReference type="PANTHER" id="PTHR31948:SF148">
    <property type="entry name" value="MINI ZINC FINGER PROTEIN 3"/>
    <property type="match status" value="1"/>
</dbReference>
<dbReference type="PANTHER" id="PTHR31948">
    <property type="entry name" value="ZINC-FINGER HOMEODOMAIN PROTEIN 2"/>
    <property type="match status" value="1"/>
</dbReference>
<dbReference type="Pfam" id="PF04770">
    <property type="entry name" value="ZF-HD_dimer"/>
    <property type="match status" value="1"/>
</dbReference>
<dbReference type="PROSITE" id="PS51523">
    <property type="entry name" value="ZF_HD_DIMER"/>
    <property type="match status" value="1"/>
</dbReference>
<proteinExistence type="evidence at protein level"/>
<reference key="1">
    <citation type="journal article" date="2006" name="Plant J.">
        <title>Characterization of a novel putative zinc finger gene MIF1: involvement in multiple hormonal regulation of Arabidopsis development.</title>
        <authorList>
            <person name="Hu W."/>
            <person name="Ma H."/>
        </authorList>
    </citation>
    <scope>NUCLEOTIDE SEQUENCE [MRNA]</scope>
    <scope>TISSUE SPECIFICITY</scope>
</reference>
<reference key="2">
    <citation type="journal article" date="2000" name="Nature">
        <title>Sequence and analysis of chromosome 1 of the plant Arabidopsis thaliana.</title>
        <authorList>
            <person name="Theologis A."/>
            <person name="Ecker J.R."/>
            <person name="Palm C.J."/>
            <person name="Federspiel N.A."/>
            <person name="Kaul S."/>
            <person name="White O."/>
            <person name="Alonso J."/>
            <person name="Altafi H."/>
            <person name="Araujo R."/>
            <person name="Bowman C.L."/>
            <person name="Brooks S.Y."/>
            <person name="Buehler E."/>
            <person name="Chan A."/>
            <person name="Chao Q."/>
            <person name="Chen H."/>
            <person name="Cheuk R.F."/>
            <person name="Chin C.W."/>
            <person name="Chung M.K."/>
            <person name="Conn L."/>
            <person name="Conway A.B."/>
            <person name="Conway A.R."/>
            <person name="Creasy T.H."/>
            <person name="Dewar K."/>
            <person name="Dunn P."/>
            <person name="Etgu P."/>
            <person name="Feldblyum T.V."/>
            <person name="Feng J.-D."/>
            <person name="Fong B."/>
            <person name="Fujii C.Y."/>
            <person name="Gill J.E."/>
            <person name="Goldsmith A.D."/>
            <person name="Haas B."/>
            <person name="Hansen N.F."/>
            <person name="Hughes B."/>
            <person name="Huizar L."/>
            <person name="Hunter J.L."/>
            <person name="Jenkins J."/>
            <person name="Johnson-Hopson C."/>
            <person name="Khan S."/>
            <person name="Khaykin E."/>
            <person name="Kim C.J."/>
            <person name="Koo H.L."/>
            <person name="Kremenetskaia I."/>
            <person name="Kurtz D.B."/>
            <person name="Kwan A."/>
            <person name="Lam B."/>
            <person name="Langin-Hooper S."/>
            <person name="Lee A."/>
            <person name="Lee J.M."/>
            <person name="Lenz C.A."/>
            <person name="Li J.H."/>
            <person name="Li Y.-P."/>
            <person name="Lin X."/>
            <person name="Liu S.X."/>
            <person name="Liu Z.A."/>
            <person name="Luros J.S."/>
            <person name="Maiti R."/>
            <person name="Marziali A."/>
            <person name="Militscher J."/>
            <person name="Miranda M."/>
            <person name="Nguyen M."/>
            <person name="Nierman W.C."/>
            <person name="Osborne B.I."/>
            <person name="Pai G."/>
            <person name="Peterson J."/>
            <person name="Pham P.K."/>
            <person name="Rizzo M."/>
            <person name="Rooney T."/>
            <person name="Rowley D."/>
            <person name="Sakano H."/>
            <person name="Salzberg S.L."/>
            <person name="Schwartz J.R."/>
            <person name="Shinn P."/>
            <person name="Southwick A.M."/>
            <person name="Sun H."/>
            <person name="Tallon L.J."/>
            <person name="Tambunga G."/>
            <person name="Toriumi M.J."/>
            <person name="Town C.D."/>
            <person name="Utterback T."/>
            <person name="Van Aken S."/>
            <person name="Vaysberg M."/>
            <person name="Vysotskaia V.S."/>
            <person name="Walker M."/>
            <person name="Wu D."/>
            <person name="Yu G."/>
            <person name="Fraser C.M."/>
            <person name="Venter J.C."/>
            <person name="Davis R.W."/>
        </authorList>
    </citation>
    <scope>NUCLEOTIDE SEQUENCE [LARGE SCALE GENOMIC DNA]</scope>
    <source>
        <strain>cv. Columbia</strain>
    </source>
</reference>
<reference key="3">
    <citation type="journal article" date="2017" name="Plant J.">
        <title>Araport11: a complete reannotation of the Arabidopsis thaliana reference genome.</title>
        <authorList>
            <person name="Cheng C.Y."/>
            <person name="Krishnakumar V."/>
            <person name="Chan A.P."/>
            <person name="Thibaud-Nissen F."/>
            <person name="Schobel S."/>
            <person name="Town C.D."/>
        </authorList>
    </citation>
    <scope>GENOME REANNOTATION</scope>
    <source>
        <strain>cv. Columbia</strain>
    </source>
</reference>
<reference key="4">
    <citation type="journal article" date="2008" name="J. Integr. Plant Biol.">
        <title>Phylogenetic analysis of the plant-specific zinc finger-homeobox and mini zinc finger gene families.</title>
        <authorList>
            <person name="Hu W."/>
            <person name="dePamphilis C.W."/>
            <person name="Ma H."/>
        </authorList>
    </citation>
    <scope>TISSUE SPECIFICITY</scope>
    <scope>GENE FAMILY</scope>
    <scope>NOMENCLATURE</scope>
</reference>
<reference key="5">
    <citation type="journal article" date="2011" name="J. Biol. Chem.">
        <title>Nuclear import and DNA binding of the ZHD5 transcription factor is modulated by a competitive peptide inhibitor in Arabidopsis.</title>
        <authorList>
            <person name="Hong S.-Y."/>
            <person name="Kim O.-K."/>
            <person name="Kim S.-G."/>
            <person name="Yang M.-S."/>
            <person name="Park C.-M."/>
        </authorList>
    </citation>
    <scope>INTERACTION WITH ZHD3; ZHD5; ZHD6; ZHD7; ZHD8; ZHD9; ZHD10 AND ZHD13</scope>
    <scope>GENE FAMILY</scope>
    <scope>NOMENCLATURE</scope>
    <source>
        <strain>cv. Columbia</strain>
    </source>
</reference>
<reference key="6">
    <citation type="journal article" date="2011" name="Plant Mol. Biol.">
        <title>Ectopic expression of the Arabidopsis MINI ZINC FINGER1 and MIF3 genes induces shoot meristems on leaf margins.</title>
        <authorList>
            <person name="Hu W."/>
            <person name="Feng B."/>
            <person name="Ma H."/>
        </authorList>
    </citation>
    <scope>FUNCTION</scope>
    <source>
        <strain>cv. Columbia</strain>
    </source>
</reference>
<evidence type="ECO:0000250" key="1"/>
<evidence type="ECO:0000255" key="2">
    <source>
        <dbReference type="PROSITE-ProRule" id="PRU00856"/>
    </source>
</evidence>
<evidence type="ECO:0000269" key="3">
    <source>
    </source>
</evidence>
<evidence type="ECO:0000269" key="4">
    <source>
    </source>
</evidence>
<evidence type="ECO:0000269" key="5">
    <source>
    </source>
</evidence>
<evidence type="ECO:0000269" key="6">
    <source>
    </source>
</evidence>
<feature type="chain" id="PRO_0000426016" description="Mini zinc finger protein 3">
    <location>
        <begin position="1"/>
        <end position="88"/>
    </location>
</feature>
<feature type="zinc finger region" description="ZF-HD dimerization-type; degenerate" evidence="2">
    <location>
        <begin position="26"/>
        <end position="72"/>
    </location>
</feature>
<name>MIF3_ARATH</name>
<comment type="function">
    <text evidence="6">Inhibits zinc finger homeodomain (ZHD) transcription factors by interacting with them to prevent both their nuclear localization and their DNA-binding properties. Involved in integrating signals from multiple hormones by regulating the expression of specific genes. Promotes the formation of ectopic shoot meristems on leaf margins.</text>
</comment>
<comment type="subunit">
    <text evidence="1 5">Homo- and heterodimers (By similarity). Interacts with ZHD3, ZHD5, ZHD6, ZHD7, ZHD8, ZHD9, ZHD10 and ZHD13.</text>
</comment>
<comment type="subcellular location">
    <subcellularLocation>
        <location evidence="1">Cytoplasm</location>
    </subcellularLocation>
</comment>
<comment type="tissue specificity">
    <text evidence="3 4">Mostly expressed in roots, stems and flowers, present in seedlings and leaves, and weakly observed in inflorescence and siliques.</text>
</comment>
<gene>
    <name type="primary">MIF3</name>
    <name type="ordered locus">At1g18835</name>
    <name type="ORF">F6A14</name>
</gene>
<organism>
    <name type="scientific">Arabidopsis thaliana</name>
    <name type="common">Mouse-ear cress</name>
    <dbReference type="NCBI Taxonomy" id="3702"/>
    <lineage>
        <taxon>Eukaryota</taxon>
        <taxon>Viridiplantae</taxon>
        <taxon>Streptophyta</taxon>
        <taxon>Embryophyta</taxon>
        <taxon>Tracheophyta</taxon>
        <taxon>Spermatophyta</taxon>
        <taxon>Magnoliopsida</taxon>
        <taxon>eudicotyledons</taxon>
        <taxon>Gunneridae</taxon>
        <taxon>Pentapetalae</taxon>
        <taxon>rosids</taxon>
        <taxon>malvids</taxon>
        <taxon>Brassicales</taxon>
        <taxon>Brassicaceae</taxon>
        <taxon>Camelineae</taxon>
        <taxon>Arabidopsis</taxon>
    </lineage>
</organism>
<accession>Q2Q493</accession>
<sequence length="88" mass="9751">MKKRQVVIKQRKSSYTMTSSSSNVRYVECQKNHAANIGGYAVDGCREFMASGGDDALTCAACGCHRNFHRREVDTEVVCEYSPPNANN</sequence>